<dbReference type="EMBL" id="CP000774">
    <property type="protein sequence ID" value="ABS63730.1"/>
    <property type="molecule type" value="Genomic_DNA"/>
</dbReference>
<dbReference type="RefSeq" id="WP_012111034.1">
    <property type="nucleotide sequence ID" value="NC_009719.1"/>
</dbReference>
<dbReference type="SMR" id="A7HUZ7"/>
<dbReference type="STRING" id="402881.Plav_2116"/>
<dbReference type="KEGG" id="pla:Plav_2116"/>
<dbReference type="eggNOG" id="COG0632">
    <property type="taxonomic scope" value="Bacteria"/>
</dbReference>
<dbReference type="HOGENOM" id="CLU_087936_3_0_5"/>
<dbReference type="OrthoDB" id="5293449at2"/>
<dbReference type="Proteomes" id="UP000006377">
    <property type="component" value="Chromosome"/>
</dbReference>
<dbReference type="GO" id="GO:0005737">
    <property type="term" value="C:cytoplasm"/>
    <property type="evidence" value="ECO:0007669"/>
    <property type="project" value="UniProtKB-SubCell"/>
</dbReference>
<dbReference type="GO" id="GO:0009379">
    <property type="term" value="C:Holliday junction helicase complex"/>
    <property type="evidence" value="ECO:0007669"/>
    <property type="project" value="InterPro"/>
</dbReference>
<dbReference type="GO" id="GO:0048476">
    <property type="term" value="C:Holliday junction resolvase complex"/>
    <property type="evidence" value="ECO:0007669"/>
    <property type="project" value="UniProtKB-UniRule"/>
</dbReference>
<dbReference type="GO" id="GO:0005524">
    <property type="term" value="F:ATP binding"/>
    <property type="evidence" value="ECO:0007669"/>
    <property type="project" value="InterPro"/>
</dbReference>
<dbReference type="GO" id="GO:0000400">
    <property type="term" value="F:four-way junction DNA binding"/>
    <property type="evidence" value="ECO:0007669"/>
    <property type="project" value="UniProtKB-UniRule"/>
</dbReference>
<dbReference type="GO" id="GO:0009378">
    <property type="term" value="F:four-way junction helicase activity"/>
    <property type="evidence" value="ECO:0007669"/>
    <property type="project" value="InterPro"/>
</dbReference>
<dbReference type="GO" id="GO:0006310">
    <property type="term" value="P:DNA recombination"/>
    <property type="evidence" value="ECO:0007669"/>
    <property type="project" value="UniProtKB-UniRule"/>
</dbReference>
<dbReference type="GO" id="GO:0006281">
    <property type="term" value="P:DNA repair"/>
    <property type="evidence" value="ECO:0007669"/>
    <property type="project" value="UniProtKB-UniRule"/>
</dbReference>
<dbReference type="CDD" id="cd14332">
    <property type="entry name" value="UBA_RuvA_C"/>
    <property type="match status" value="1"/>
</dbReference>
<dbReference type="Gene3D" id="1.10.150.20">
    <property type="entry name" value="5' to 3' exonuclease, C-terminal subdomain"/>
    <property type="match status" value="1"/>
</dbReference>
<dbReference type="Gene3D" id="1.10.8.10">
    <property type="entry name" value="DNA helicase RuvA subunit, C-terminal domain"/>
    <property type="match status" value="1"/>
</dbReference>
<dbReference type="Gene3D" id="2.40.50.140">
    <property type="entry name" value="Nucleic acid-binding proteins"/>
    <property type="match status" value="1"/>
</dbReference>
<dbReference type="HAMAP" id="MF_00031">
    <property type="entry name" value="DNA_HJ_migration_RuvA"/>
    <property type="match status" value="1"/>
</dbReference>
<dbReference type="InterPro" id="IPR013849">
    <property type="entry name" value="DNA_helicase_Holl-junc_RuvA_I"/>
</dbReference>
<dbReference type="InterPro" id="IPR012340">
    <property type="entry name" value="NA-bd_OB-fold"/>
</dbReference>
<dbReference type="InterPro" id="IPR000085">
    <property type="entry name" value="RuvA"/>
</dbReference>
<dbReference type="InterPro" id="IPR010994">
    <property type="entry name" value="RuvA_2-like"/>
</dbReference>
<dbReference type="InterPro" id="IPR011114">
    <property type="entry name" value="RuvA_C"/>
</dbReference>
<dbReference type="InterPro" id="IPR036267">
    <property type="entry name" value="RuvA_C_sf"/>
</dbReference>
<dbReference type="NCBIfam" id="TIGR00084">
    <property type="entry name" value="ruvA"/>
    <property type="match status" value="1"/>
</dbReference>
<dbReference type="Pfam" id="PF14520">
    <property type="entry name" value="HHH_5"/>
    <property type="match status" value="1"/>
</dbReference>
<dbReference type="Pfam" id="PF07499">
    <property type="entry name" value="RuvA_C"/>
    <property type="match status" value="1"/>
</dbReference>
<dbReference type="Pfam" id="PF01330">
    <property type="entry name" value="RuvA_N"/>
    <property type="match status" value="1"/>
</dbReference>
<dbReference type="SUPFAM" id="SSF46929">
    <property type="entry name" value="DNA helicase RuvA subunit, C-terminal domain"/>
    <property type="match status" value="1"/>
</dbReference>
<dbReference type="SUPFAM" id="SSF50249">
    <property type="entry name" value="Nucleic acid-binding proteins"/>
    <property type="match status" value="1"/>
</dbReference>
<dbReference type="SUPFAM" id="SSF47781">
    <property type="entry name" value="RuvA domain 2-like"/>
    <property type="match status" value="1"/>
</dbReference>
<keyword id="KW-0963">Cytoplasm</keyword>
<keyword id="KW-0227">DNA damage</keyword>
<keyword id="KW-0233">DNA recombination</keyword>
<keyword id="KW-0234">DNA repair</keyword>
<keyword id="KW-0238">DNA-binding</keyword>
<keyword id="KW-1185">Reference proteome</keyword>
<feature type="chain" id="PRO_1000071019" description="Holliday junction branch migration complex subunit RuvA">
    <location>
        <begin position="1"/>
        <end position="205"/>
    </location>
</feature>
<feature type="region of interest" description="Domain I" evidence="1">
    <location>
        <begin position="1"/>
        <end position="64"/>
    </location>
</feature>
<feature type="region of interest" description="Domain II" evidence="1">
    <location>
        <begin position="65"/>
        <end position="143"/>
    </location>
</feature>
<feature type="region of interest" description="Flexible linker" evidence="1">
    <location>
        <begin position="144"/>
        <end position="152"/>
    </location>
</feature>
<feature type="region of interest" description="Domain III" evidence="1">
    <location>
        <begin position="153"/>
        <end position="205"/>
    </location>
</feature>
<sequence>MIGKLRGIVDSTGEDWAVIDVGGVGYHVTCSSRTLRNLPPAGGAVTLSIETKVSDEAIRLIGFTTDSEREWFRLLLAVQGVGTRVALGVLGTLAPADLARAIALDDKKAVSAAPGVGPKVAARIVTELKDKVPDSMGLSAALEVGVNGEAVSSVSAPARDAVSALVNLGYPQAQAMGAVAAAAKRLDDAASTEQLIRHGLKELAR</sequence>
<comment type="function">
    <text evidence="1">The RuvA-RuvB-RuvC complex processes Holliday junction (HJ) DNA during genetic recombination and DNA repair, while the RuvA-RuvB complex plays an important role in the rescue of blocked DNA replication forks via replication fork reversal (RFR). RuvA specifically binds to HJ cruciform DNA, conferring on it an open structure. The RuvB hexamer acts as an ATP-dependent pump, pulling dsDNA into and through the RuvAB complex. HJ branch migration allows RuvC to scan DNA until it finds its consensus sequence, where it cleaves and resolves the cruciform DNA.</text>
</comment>
<comment type="subunit">
    <text evidence="1">Homotetramer. Forms an RuvA(8)-RuvB(12)-Holliday junction (HJ) complex. HJ DNA is sandwiched between 2 RuvA tetramers; dsDNA enters through RuvA and exits via RuvB. An RuvB hexamer assembles on each DNA strand where it exits the tetramer. Each RuvB hexamer is contacted by two RuvA subunits (via domain III) on 2 adjacent RuvB subunits; this complex drives branch migration. In the full resolvosome a probable DNA-RuvA(4)-RuvB(12)-RuvC(2) complex forms which resolves the HJ.</text>
</comment>
<comment type="subcellular location">
    <subcellularLocation>
        <location evidence="1">Cytoplasm</location>
    </subcellularLocation>
</comment>
<comment type="domain">
    <text evidence="1">Has three domains with a flexible linker between the domains II and III and assumes an 'L' shape. Domain III is highly mobile and contacts RuvB.</text>
</comment>
<comment type="similarity">
    <text evidence="1">Belongs to the RuvA family.</text>
</comment>
<proteinExistence type="inferred from homology"/>
<accession>A7HUZ7</accession>
<reference key="1">
    <citation type="journal article" date="2011" name="Stand. Genomic Sci.">
        <title>Complete genome sequence of Parvibaculum lavamentivorans type strain (DS-1(T)).</title>
        <authorList>
            <person name="Schleheck D."/>
            <person name="Weiss M."/>
            <person name="Pitluck S."/>
            <person name="Bruce D."/>
            <person name="Land M.L."/>
            <person name="Han S."/>
            <person name="Saunders E."/>
            <person name="Tapia R."/>
            <person name="Detter C."/>
            <person name="Brettin T."/>
            <person name="Han J."/>
            <person name="Woyke T."/>
            <person name="Goodwin L."/>
            <person name="Pennacchio L."/>
            <person name="Nolan M."/>
            <person name="Cook A.M."/>
            <person name="Kjelleberg S."/>
            <person name="Thomas T."/>
        </authorList>
    </citation>
    <scope>NUCLEOTIDE SEQUENCE [LARGE SCALE GENOMIC DNA]</scope>
    <source>
        <strain>DS-1 / DSM 13023 / NCIMB 13966</strain>
    </source>
</reference>
<gene>
    <name evidence="1" type="primary">ruvA</name>
    <name type="ordered locus">Plav_2116</name>
</gene>
<evidence type="ECO:0000255" key="1">
    <source>
        <dbReference type="HAMAP-Rule" id="MF_00031"/>
    </source>
</evidence>
<protein>
    <recommendedName>
        <fullName evidence="1">Holliday junction branch migration complex subunit RuvA</fullName>
    </recommendedName>
</protein>
<organism>
    <name type="scientific">Parvibaculum lavamentivorans (strain DS-1 / DSM 13023 / NCIMB 13966)</name>
    <dbReference type="NCBI Taxonomy" id="402881"/>
    <lineage>
        <taxon>Bacteria</taxon>
        <taxon>Pseudomonadati</taxon>
        <taxon>Pseudomonadota</taxon>
        <taxon>Alphaproteobacteria</taxon>
        <taxon>Hyphomicrobiales</taxon>
        <taxon>Parvibaculaceae</taxon>
        <taxon>Parvibaculum</taxon>
    </lineage>
</organism>
<name>RUVA_PARL1</name>